<gene>
    <name type="primary">MDS</name>
    <name type="ORF">SELMODRAFT_450918</name>
</gene>
<reference key="1">
    <citation type="journal article" date="2011" name="J. Biol. Chem.">
        <title>Enzymatic (13)C labeling and multidimensional NMR analysis of miltiradiene synthesized by bifunctional diterpene cyclase in Selaginella moellendorffii.</title>
        <authorList>
            <person name="Sugai Y."/>
            <person name="Ueno Y."/>
            <person name="Hayashi K."/>
            <person name="Oogami S."/>
            <person name="Toyomasu T."/>
            <person name="Matsumoto S."/>
            <person name="Natsume M."/>
            <person name="Nozaki H."/>
            <person name="Kawaide H."/>
        </authorList>
    </citation>
    <scope>NUCLEOTIDE SEQUENCE [MRNA]</scope>
    <scope>FUNCTION</scope>
    <scope>CATALYTIC ACTIVITY</scope>
    <scope>MUTAGENESIS OF 391-ASP-ASP-392 AND 611-ASP-ASP-612</scope>
</reference>
<reference key="2">
    <citation type="journal article" date="2011" name="Science">
        <title>The Selaginella genome identifies genetic changes associated with the evolution of vascular plants.</title>
        <authorList>
            <person name="Banks J.A."/>
            <person name="Nishiyama T."/>
            <person name="Hasebe M."/>
            <person name="Bowman J.L."/>
            <person name="Gribskov M."/>
            <person name="dePamphilis C."/>
            <person name="Albert V.A."/>
            <person name="Aono N."/>
            <person name="Aoyama T."/>
            <person name="Ambrose B.A."/>
            <person name="Ashton N.W."/>
            <person name="Axtell M.J."/>
            <person name="Barker E."/>
            <person name="Barker M.S."/>
            <person name="Bennetzen J.L."/>
            <person name="Bonawitz N.D."/>
            <person name="Chapple C."/>
            <person name="Cheng C."/>
            <person name="Correa L.G."/>
            <person name="Dacre M."/>
            <person name="DeBarry J."/>
            <person name="Dreyer I."/>
            <person name="Elias M."/>
            <person name="Engstrom E.M."/>
            <person name="Estelle M."/>
            <person name="Feng L."/>
            <person name="Finet C."/>
            <person name="Floyd S.K."/>
            <person name="Frommer W.B."/>
            <person name="Fujita T."/>
            <person name="Gramzow L."/>
            <person name="Gutensohn M."/>
            <person name="Harholt J."/>
            <person name="Hattori M."/>
            <person name="Heyl A."/>
            <person name="Hirai T."/>
            <person name="Hiwatashi Y."/>
            <person name="Ishikawa M."/>
            <person name="Iwata M."/>
            <person name="Karol K.G."/>
            <person name="Koehler B."/>
            <person name="Kolukisaoglu U."/>
            <person name="Kubo M."/>
            <person name="Kurata T."/>
            <person name="Lalonde S."/>
            <person name="Li K."/>
            <person name="Li Y."/>
            <person name="Litt A."/>
            <person name="Lyons E."/>
            <person name="Manning G."/>
            <person name="Maruyama T."/>
            <person name="Michael T.P."/>
            <person name="Mikami K."/>
            <person name="Miyazaki S."/>
            <person name="Morinaga S."/>
            <person name="Murata T."/>
            <person name="Mueller-Roeber B."/>
            <person name="Nelson D.R."/>
            <person name="Obara M."/>
            <person name="Oguri Y."/>
            <person name="Olmstead R.G."/>
            <person name="Onodera N."/>
            <person name="Petersen B.L."/>
            <person name="Pils B."/>
            <person name="Prigge M."/>
            <person name="Rensing S.A."/>
            <person name="Riano-Pachon D.M."/>
            <person name="Roberts A.W."/>
            <person name="Sato Y."/>
            <person name="Scheller H.V."/>
            <person name="Schulz B."/>
            <person name="Schulz C."/>
            <person name="Shakirov E.V."/>
            <person name="Shibagaki N."/>
            <person name="Shinohara N."/>
            <person name="Shippen D.E."/>
            <person name="Soerensen I."/>
            <person name="Sotooka R."/>
            <person name="Sugimoto N."/>
            <person name="Sugita M."/>
            <person name="Sumikawa N."/>
            <person name="Tanurdzic M."/>
            <person name="Theissen G."/>
            <person name="Ulvskov P."/>
            <person name="Wakazuki S."/>
            <person name="Weng J.K."/>
            <person name="Willats W.W."/>
            <person name="Wipf D."/>
            <person name="Wolf P.G."/>
            <person name="Yang L."/>
            <person name="Zimmer A.D."/>
            <person name="Zhu Q."/>
            <person name="Mitros T."/>
            <person name="Hellsten U."/>
            <person name="Loque D."/>
            <person name="Otillar R."/>
            <person name="Salamov A."/>
            <person name="Schmutz J."/>
            <person name="Shapiro H."/>
            <person name="Lindquist E."/>
            <person name="Lucas S."/>
            <person name="Rokhsar D."/>
            <person name="Grigoriev I.V."/>
        </authorList>
    </citation>
    <scope>NUCLEOTIDE SEQUENCE [LARGE SCALE GENOMIC DNA]</scope>
</reference>
<reference key="3">
    <citation type="journal article" date="2012" name="Proc. Natl. Acad. Sci. U.S.A.">
        <title>Nonseed plant Selaginella moellendorfii has both seed plant and microbial types of terpene synthases.</title>
        <authorList>
            <person name="Li G."/>
            <person name="Kollner T.G."/>
            <person name="Yin Y."/>
            <person name="Jiang Y."/>
            <person name="Chen H."/>
            <person name="Xu Y."/>
            <person name="Gershenzon J."/>
            <person name="Pichersky E."/>
            <person name="Chen F."/>
        </authorList>
    </citation>
    <scope>GENE FAMILY</scope>
    <scope>NOMENCLATURE</scope>
</reference>
<protein>
    <recommendedName>
        <fullName>Bifunctional diterpene synthase, chloroplastic</fullName>
    </recommendedName>
    <alternativeName>
        <fullName>Copalyl diphosphate synthase</fullName>
        <ecNumber>5.5.1.12</ecNumber>
    </alternativeName>
    <alternativeName>
        <fullName>Miltiradiene synthase</fullName>
        <shortName>SmMDS</shortName>
        <ecNumber>4.2.3.131</ecNumber>
    </alternativeName>
    <alternativeName>
        <fullName>Terpene synthase 4</fullName>
        <shortName>SmTPS4</shortName>
    </alternativeName>
</protein>
<accession>G9MAN7</accession>
<accession>D8R8K9</accession>
<sequence length="867" mass="99915">MAKVLFSSFQQTGISGSLKSGQLSGVFINGTNLKSNAHAKRFRKNSTSSITIRCCASNSPTLENTKLAGAPEKRQKKKQLPYQGILHVPGDRVEELDTRETSLLVAEVKGWLMKLASGKGEISPSAYDTAWVARIASESDSSLPEFPEALEWIINSQLPDGSWGDDRHLQLYDRVLSTLSCLVTLKTWDIGHNSIAQGTKFLRENMIKLKQDDGDLLSGFEVTFPMMLHEAKQLGLDIPYETEFTRLLEISTKKKLAKIPLDKLHSAPTTLLYSLEGLQDLEIDWQKILKLQSKDGSFLSSPSSTACVYLKTKDRKSLQYLQNAMEDQNYAVPCHYPIDLFESLWVVDTIERLGIDVFFRDEIKAVLDYVYSFWTNEGIGWGSTCLVNDIDDTAMAFRILRMHGYNVSPDAFNQFWLPGDKFCCFVGELSHGVSEMLNLHRASQVDFPNEAILTKTFKYSHDYLLNVDSAHMDKWATKKNLMGEVAFELANPFHDCLPRIYNNAYIKHYGMDDLWIAKTIYRLPLVNNKVFLELANRYAQQCQLYQPAELTKLVNWWHSSRFEDIPSTRLTANIDMLPYIYYVICATFHEQEFAQLRVFFSKACCLNTLFDDLMDCATSIEELDRLQNVIERWDISLSHELPLEYRIPFQEFYNTVLVMTEAASKIHKNLSPEFICKYLSGIYTKLIKSEIADARWKIEGYIPSFEEYMENAEVSISTWVHVLMSILFCGEPLTEEILNTIYDSRPLKLDRIICRLCNDIQTYKIEMKLGQPTQGVSCYMKEHPGATEEDALVYLQSLLEKTKRELNESYFITHENDLPKNIKRFNFEMVRMMLITYNETRQVDLFRNPDNELKDMIKFCLETYRTL</sequence>
<dbReference type="EC" id="5.5.1.12"/>
<dbReference type="EC" id="4.2.3.131"/>
<dbReference type="EMBL" id="AB668998">
    <property type="protein sequence ID" value="BAL41682.1"/>
    <property type="molecule type" value="mRNA"/>
</dbReference>
<dbReference type="EMBL" id="GL377573">
    <property type="protein sequence ID" value="EFJ31716.1"/>
    <property type="status" value="ALT_SEQ"/>
    <property type="molecule type" value="Genomic_DNA"/>
</dbReference>
<dbReference type="RefSeq" id="XP_002967117.1">
    <property type="nucleotide sequence ID" value="XM_002967071.1"/>
</dbReference>
<dbReference type="PDB" id="7WAT">
    <property type="method" value="X-ray"/>
    <property type="resolution" value="2.00 A"/>
    <property type="chains" value="B=90-867"/>
</dbReference>
<dbReference type="PDB" id="7Y47">
    <property type="method" value="X-ray"/>
    <property type="resolution" value="2.50 A"/>
    <property type="chains" value="B=90-867"/>
</dbReference>
<dbReference type="PDBsum" id="7WAT"/>
<dbReference type="PDBsum" id="7Y47"/>
<dbReference type="SMR" id="G9MAN7"/>
<dbReference type="STRING" id="88036.G9MAN7"/>
<dbReference type="KEGG" id="smo:SELMODRAFT_450918"/>
<dbReference type="eggNOG" id="ENOG502QQN6">
    <property type="taxonomic scope" value="Eukaryota"/>
</dbReference>
<dbReference type="InParanoid" id="G9MAN7"/>
<dbReference type="BioCyc" id="MetaCyc:GIO6-20123-MONOMER"/>
<dbReference type="BRENDA" id="5.5.1.12">
    <property type="organism ID" value="9844"/>
</dbReference>
<dbReference type="UniPathway" id="UPA00213"/>
<dbReference type="Proteomes" id="UP000001514">
    <property type="component" value="Unassembled WGS sequence"/>
</dbReference>
<dbReference type="GO" id="GO:0009507">
    <property type="term" value="C:chloroplast"/>
    <property type="evidence" value="ECO:0007669"/>
    <property type="project" value="UniProtKB-SubCell"/>
</dbReference>
<dbReference type="GO" id="GO:0050559">
    <property type="term" value="F:copalyl diphosphate synthase activity"/>
    <property type="evidence" value="ECO:0000314"/>
    <property type="project" value="UniProtKB"/>
</dbReference>
<dbReference type="GO" id="GO:0000287">
    <property type="term" value="F:magnesium ion binding"/>
    <property type="evidence" value="ECO:0000318"/>
    <property type="project" value="GO_Central"/>
</dbReference>
<dbReference type="GO" id="GO:0062205">
    <property type="term" value="F:miltiradiene synthase activity"/>
    <property type="evidence" value="ECO:0007669"/>
    <property type="project" value="UniProtKB-EC"/>
</dbReference>
<dbReference type="GO" id="GO:0010333">
    <property type="term" value="F:terpene synthase activity"/>
    <property type="evidence" value="ECO:0000318"/>
    <property type="project" value="GO_Central"/>
</dbReference>
<dbReference type="GO" id="GO:1901949">
    <property type="term" value="P:5alpha,9alpha,10beta-labda-8(20),13-dien-15-yl diphosphate biosynthetic process"/>
    <property type="evidence" value="ECO:0000314"/>
    <property type="project" value="UniProtKB"/>
</dbReference>
<dbReference type="GO" id="GO:1901948">
    <property type="term" value="P:5alpha,9alpha,10beta-labda-8(20),13-dien-15-yl diphosphate catabolic process"/>
    <property type="evidence" value="ECO:0000314"/>
    <property type="project" value="UniProtKB"/>
</dbReference>
<dbReference type="GO" id="GO:0016102">
    <property type="term" value="P:diterpenoid biosynthetic process"/>
    <property type="evidence" value="ECO:0000318"/>
    <property type="project" value="GO_Central"/>
</dbReference>
<dbReference type="GO" id="GO:1901946">
    <property type="term" value="P:miltiradiene biosynthetic process"/>
    <property type="evidence" value="ECO:0000314"/>
    <property type="project" value="UniProtKB"/>
</dbReference>
<dbReference type="FunFam" id="1.10.600.10:FF:000036">
    <property type="entry name" value="cis-abienol synthase, chloroplastic"/>
    <property type="match status" value="1"/>
</dbReference>
<dbReference type="FunFam" id="1.50.10.130:FF:000002">
    <property type="entry name" value="Ent-copalyl diphosphate synthase, chloroplastic"/>
    <property type="match status" value="1"/>
</dbReference>
<dbReference type="Gene3D" id="1.50.10.160">
    <property type="match status" value="1"/>
</dbReference>
<dbReference type="Gene3D" id="1.10.600.10">
    <property type="entry name" value="Farnesyl Diphosphate Synthase"/>
    <property type="match status" value="1"/>
</dbReference>
<dbReference type="Gene3D" id="1.50.10.130">
    <property type="entry name" value="Terpene synthase, N-terminal domain"/>
    <property type="match status" value="1"/>
</dbReference>
<dbReference type="InterPro" id="IPR008949">
    <property type="entry name" value="Isoprenoid_synthase_dom_sf"/>
</dbReference>
<dbReference type="InterPro" id="IPR001906">
    <property type="entry name" value="Terpene_synth_N"/>
</dbReference>
<dbReference type="InterPro" id="IPR036965">
    <property type="entry name" value="Terpene_synth_N_sf"/>
</dbReference>
<dbReference type="InterPro" id="IPR050148">
    <property type="entry name" value="Terpene_synthase-like"/>
</dbReference>
<dbReference type="InterPro" id="IPR005630">
    <property type="entry name" value="Terpene_synthase_metal-bd"/>
</dbReference>
<dbReference type="InterPro" id="IPR008930">
    <property type="entry name" value="Terpenoid_cyclase/PrenylTrfase"/>
</dbReference>
<dbReference type="PANTHER" id="PTHR31739">
    <property type="entry name" value="ENT-COPALYL DIPHOSPHATE SYNTHASE, CHLOROPLASTIC"/>
    <property type="match status" value="1"/>
</dbReference>
<dbReference type="PANTHER" id="PTHR31739:SF4">
    <property type="entry name" value="ENT-COPALYL DIPHOSPHATE SYNTHASE, CHLOROPLASTIC"/>
    <property type="match status" value="1"/>
</dbReference>
<dbReference type="Pfam" id="PF01397">
    <property type="entry name" value="Terpene_synth"/>
    <property type="match status" value="1"/>
</dbReference>
<dbReference type="Pfam" id="PF03936">
    <property type="entry name" value="Terpene_synth_C"/>
    <property type="match status" value="1"/>
</dbReference>
<dbReference type="SFLD" id="SFLDG01014">
    <property type="entry name" value="Terpene_Cyclase_Like_1_N-term"/>
    <property type="match status" value="1"/>
</dbReference>
<dbReference type="SFLD" id="SFLDG01605">
    <property type="entry name" value="Terpene_Cyclase_Like_1_N-term"/>
    <property type="match status" value="1"/>
</dbReference>
<dbReference type="SUPFAM" id="SSF48239">
    <property type="entry name" value="Terpenoid cyclases/Protein prenyltransferases"/>
    <property type="match status" value="2"/>
</dbReference>
<dbReference type="SUPFAM" id="SSF48576">
    <property type="entry name" value="Terpenoid synthases"/>
    <property type="match status" value="1"/>
</dbReference>
<comment type="function">
    <text evidence="5">Bifunctional diterpene cyclase that catalyzes the successive two-step type-B (protonation-initiated cyclization) and type-A (ionization-initiated cyclization) reactions of geranylgeranyl diphosphate (GGDP) producing successively (+)-copalyl diphosphate and miltiradiene.</text>
</comment>
<comment type="catalytic activity">
    <reaction evidence="5">
        <text>(+)-copalyl diphosphate = miltiradiene + diphosphate</text>
        <dbReference type="Rhea" id="RHEA:33983"/>
        <dbReference type="ChEBI" id="CHEBI:33019"/>
        <dbReference type="ChEBI" id="CHEBI:58635"/>
        <dbReference type="ChEBI" id="CHEBI:65037"/>
        <dbReference type="EC" id="4.2.3.131"/>
    </reaction>
</comment>
<comment type="catalytic activity">
    <reaction evidence="5">
        <text>(2E,6E,10E)-geranylgeranyl diphosphate = (+)-copalyl diphosphate</text>
        <dbReference type="Rhea" id="RHEA:24316"/>
        <dbReference type="ChEBI" id="CHEBI:58635"/>
        <dbReference type="ChEBI" id="CHEBI:58756"/>
        <dbReference type="EC" id="5.5.1.12"/>
    </reaction>
</comment>
<comment type="cofactor">
    <cofactor evidence="1">
        <name>Mg(2+)</name>
        <dbReference type="ChEBI" id="CHEBI:18420"/>
    </cofactor>
    <text evidence="1">Binds 3 Mg(2+) ions per subunit.</text>
</comment>
<comment type="pathway">
    <text>Secondary metabolite biosynthesis; terpenoid biosynthesis.</text>
</comment>
<comment type="subcellular location">
    <subcellularLocation>
        <location evidence="6">Plastid</location>
        <location evidence="6">Chloroplast</location>
    </subcellularLocation>
</comment>
<comment type="domain">
    <text evidence="1">The Asp-Xaa-Asp-Asp (DXDD) and Asp-Asp-Xaa-Xaa-Asp/Glu (DDXXD/E) motifs are important for the catalytic activities, presumably through binding to Mg(2+).</text>
</comment>
<comment type="miscellaneous">
    <text>S.moellendorffii contains two distinct types of functional terpene synthases (TPS) genes, the typical seed plants TPS genes (SmTPSs) and the microbial type TPS genes (SmMTPSLs).</text>
</comment>
<comment type="similarity">
    <text evidence="6">Belongs to the terpene synthase family.</text>
</comment>
<comment type="sequence caution" evidence="6">
    <conflict type="erroneous gene model prediction">
        <sequence resource="EMBL-CDS" id="EFJ31716"/>
    </conflict>
</comment>
<evidence type="ECO:0000250" key="1"/>
<evidence type="ECO:0000250" key="2">
    <source>
        <dbReference type="UniProtKB" id="C7BKP9"/>
    </source>
</evidence>
<evidence type="ECO:0000250" key="3">
    <source>
        <dbReference type="UniProtKB" id="Q38802"/>
    </source>
</evidence>
<evidence type="ECO:0000255" key="4"/>
<evidence type="ECO:0000269" key="5">
    <source>
    </source>
</evidence>
<evidence type="ECO:0000305" key="6"/>
<evidence type="ECO:0007829" key="7">
    <source>
        <dbReference type="PDB" id="7WAT"/>
    </source>
</evidence>
<evidence type="ECO:0007829" key="8">
    <source>
        <dbReference type="PDB" id="7Y47"/>
    </source>
</evidence>
<keyword id="KW-0002">3D-structure</keyword>
<keyword id="KW-0150">Chloroplast</keyword>
<keyword id="KW-0413">Isomerase</keyword>
<keyword id="KW-0456">Lyase</keyword>
<keyword id="KW-0460">Magnesium</keyword>
<keyword id="KW-0479">Metal-binding</keyword>
<keyword id="KW-0934">Plastid</keyword>
<keyword id="KW-1185">Reference proteome</keyword>
<keyword id="KW-0809">Transit peptide</keyword>
<name>TPS4_SELML</name>
<proteinExistence type="evidence at protein level"/>
<feature type="transit peptide" description="Chloroplast" evidence="4">
    <location>
        <begin position="1"/>
        <end position="55"/>
    </location>
</feature>
<feature type="chain" id="PRO_0000421937" description="Bifunctional diterpene synthase, chloroplastic">
    <location>
        <begin position="56"/>
        <end position="867"/>
    </location>
</feature>
<feature type="short sequence motif" description="DXDD motif">
    <location>
        <begin position="389"/>
        <end position="392"/>
    </location>
</feature>
<feature type="short sequence motif" description="DDXXD motif">
    <location>
        <begin position="611"/>
        <end position="615"/>
    </location>
</feature>
<feature type="binding site" evidence="3">
    <location>
        <position position="255"/>
    </location>
    <ligand>
        <name>substrate</name>
    </ligand>
</feature>
<feature type="binding site" evidence="2">
    <location>
        <position position="389"/>
    </location>
    <ligand>
        <name>Mg(2+)</name>
        <dbReference type="ChEBI" id="CHEBI:18420"/>
        <label>4</label>
    </ligand>
</feature>
<feature type="binding site" evidence="2">
    <location>
        <position position="391"/>
    </location>
    <ligand>
        <name>Mg(2+)</name>
        <dbReference type="ChEBI" id="CHEBI:18420"/>
        <label>4</label>
    </ligand>
</feature>
<feature type="binding site" evidence="3">
    <location>
        <position position="474"/>
    </location>
    <ligand>
        <name>substrate</name>
    </ligand>
</feature>
<feature type="binding site" evidence="1">
    <location>
        <position position="611"/>
    </location>
    <ligand>
        <name>Mg(2+)</name>
        <dbReference type="ChEBI" id="CHEBI:18420"/>
        <label>1</label>
    </ligand>
</feature>
<feature type="binding site" evidence="1">
    <location>
        <position position="611"/>
    </location>
    <ligand>
        <name>Mg(2+)</name>
        <dbReference type="ChEBI" id="CHEBI:18420"/>
        <label>2</label>
    </ligand>
</feature>
<feature type="binding site" evidence="1">
    <location>
        <position position="615"/>
    </location>
    <ligand>
        <name>Mg(2+)</name>
        <dbReference type="ChEBI" id="CHEBI:18420"/>
        <label>1</label>
    </ligand>
</feature>
<feature type="binding site" evidence="1">
    <location>
        <position position="615"/>
    </location>
    <ligand>
        <name>Mg(2+)</name>
        <dbReference type="ChEBI" id="CHEBI:18420"/>
        <label>2</label>
    </ligand>
</feature>
<feature type="binding site" evidence="1">
    <location>
        <position position="758"/>
    </location>
    <ligand>
        <name>Mg(2+)</name>
        <dbReference type="ChEBI" id="CHEBI:18420"/>
        <label>3</label>
    </ligand>
</feature>
<feature type="binding site" evidence="1">
    <location>
        <position position="762"/>
    </location>
    <ligand>
        <name>Mg(2+)</name>
        <dbReference type="ChEBI" id="CHEBI:18420"/>
        <label>3</label>
    </ligand>
</feature>
<feature type="binding site" evidence="1">
    <location>
        <position position="766"/>
    </location>
    <ligand>
        <name>Mg(2+)</name>
        <dbReference type="ChEBI" id="CHEBI:18420"/>
        <label>3</label>
    </ligand>
</feature>
<feature type="mutagenesis site" description="Can use only (+)-copalyl diphosphate as substrate." evidence="5">
    <original>DD</original>
    <variation>GG</variation>
    <location>
        <begin position="391"/>
        <end position="392"/>
    </location>
</feature>
<feature type="mutagenesis site" description="Produces only (+)-copalyl diphosphate." evidence="5">
    <original>DD</original>
    <variation>GG</variation>
    <location>
        <begin position="611"/>
        <end position="612"/>
    </location>
</feature>
<feature type="sequence conflict" description="In Ref. 1; BAL41682." evidence="6" ref="1">
    <original>I</original>
    <variation>T</variation>
    <location>
        <position position="28"/>
    </location>
</feature>
<feature type="sequence conflict" description="In Ref. 1; BAL41682." evidence="6" ref="1">
    <original>R</original>
    <variation>S</variation>
    <location>
        <position position="53"/>
    </location>
</feature>
<feature type="sequence conflict" description="In Ref. 1; BAL41682." evidence="6" ref="1">
    <original>G</original>
    <variation>E</variation>
    <location>
        <position position="69"/>
    </location>
</feature>
<feature type="sequence conflict" description="In Ref. 1; BAL41682." evidence="6" ref="1">
    <original>A</original>
    <variation>P</variation>
    <location>
        <position position="136"/>
    </location>
</feature>
<feature type="sequence conflict" description="In Ref. 1; BAL41682." evidence="6" ref="1">
    <original>L</original>
    <variation>I</variation>
    <location>
        <position position="264"/>
    </location>
</feature>
<feature type="sequence conflict" description="In Ref. 1; BAL41682." evidence="6" ref="1">
    <original>D</original>
    <variation>G</variation>
    <location>
        <position position="314"/>
    </location>
</feature>
<feature type="sequence conflict" description="In Ref. 1; BAL41682." evidence="6" ref="1">
    <original>P</original>
    <variation>T</variation>
    <location>
        <position position="409"/>
    </location>
</feature>
<feature type="sequence conflict" description="In Ref. 1; BAL41682." evidence="6" ref="1">
    <original>R</original>
    <variation>K</variation>
    <location>
        <position position="632"/>
    </location>
</feature>
<feature type="helix" evidence="7">
    <location>
        <begin position="101"/>
        <end position="115"/>
    </location>
</feature>
<feature type="turn" evidence="7">
    <location>
        <begin position="116"/>
        <end position="118"/>
    </location>
</feature>
<feature type="helix" evidence="7">
    <location>
        <begin position="126"/>
        <end position="132"/>
    </location>
</feature>
<feature type="strand" evidence="7">
    <location>
        <begin position="143"/>
        <end position="145"/>
    </location>
</feature>
<feature type="helix" evidence="7">
    <location>
        <begin position="147"/>
        <end position="155"/>
    </location>
</feature>
<feature type="strand" evidence="7">
    <location>
        <begin position="166"/>
        <end position="168"/>
    </location>
</feature>
<feature type="helix" evidence="7">
    <location>
        <begin position="171"/>
        <end position="187"/>
    </location>
</feature>
<feature type="helix" evidence="7">
    <location>
        <begin position="192"/>
        <end position="205"/>
    </location>
</feature>
<feature type="helix" evidence="7">
    <location>
        <begin position="206"/>
        <end position="208"/>
    </location>
</feature>
<feature type="strand" evidence="8">
    <location>
        <begin position="211"/>
        <end position="214"/>
    </location>
</feature>
<feature type="helix" evidence="7">
    <location>
        <begin position="220"/>
        <end position="233"/>
    </location>
</feature>
<feature type="helix" evidence="7">
    <location>
        <begin position="243"/>
        <end position="257"/>
    </location>
</feature>
<feature type="helix" evidence="7">
    <location>
        <begin position="263"/>
        <end position="266"/>
    </location>
</feature>
<feature type="helix" evidence="7">
    <location>
        <begin position="270"/>
        <end position="278"/>
    </location>
</feature>
<feature type="helix" evidence="7">
    <location>
        <begin position="285"/>
        <end position="288"/>
    </location>
</feature>
<feature type="helix" evidence="7">
    <location>
        <begin position="289"/>
        <end position="291"/>
    </location>
</feature>
<feature type="helix" evidence="7">
    <location>
        <begin position="302"/>
        <end position="312"/>
    </location>
</feature>
<feature type="helix" evidence="7">
    <location>
        <begin position="315"/>
        <end position="327"/>
    </location>
</feature>
<feature type="turn" evidence="7">
    <location>
        <begin position="328"/>
        <end position="330"/>
    </location>
</feature>
<feature type="strand" evidence="7">
    <location>
        <begin position="334"/>
        <end position="336"/>
    </location>
</feature>
<feature type="helix" evidence="7">
    <location>
        <begin position="339"/>
        <end position="352"/>
    </location>
</feature>
<feature type="helix" evidence="7">
    <location>
        <begin position="356"/>
        <end position="358"/>
    </location>
</feature>
<feature type="helix" evidence="7">
    <location>
        <begin position="360"/>
        <end position="371"/>
    </location>
</feature>
<feature type="helix" evidence="7">
    <location>
        <begin position="390"/>
        <end position="402"/>
    </location>
</feature>
<feature type="helix" evidence="7">
    <location>
        <begin position="409"/>
        <end position="415"/>
    </location>
</feature>
<feature type="turn" evidence="7">
    <location>
        <begin position="418"/>
        <end position="420"/>
    </location>
</feature>
<feature type="helix" evidence="7">
    <location>
        <begin position="433"/>
        <end position="443"/>
    </location>
</feature>
<feature type="helix" evidence="7">
    <location>
        <begin position="451"/>
        <end position="465"/>
    </location>
</feature>
<feature type="helix" evidence="7">
    <location>
        <begin position="469"/>
        <end position="471"/>
    </location>
</feature>
<feature type="turn" evidence="7">
    <location>
        <begin position="472"/>
        <end position="475"/>
    </location>
</feature>
<feature type="strand" evidence="7">
    <location>
        <begin position="477"/>
        <end position="479"/>
    </location>
</feature>
<feature type="helix" evidence="7">
    <location>
        <begin position="481"/>
        <end position="490"/>
    </location>
</feature>
<feature type="helix" evidence="7">
    <location>
        <begin position="493"/>
        <end position="495"/>
    </location>
</feature>
<feature type="helix" evidence="7">
    <location>
        <begin position="498"/>
        <end position="508"/>
    </location>
</feature>
<feature type="strand" evidence="7">
    <location>
        <begin position="515"/>
        <end position="521"/>
    </location>
</feature>
<feature type="turn" evidence="7">
    <location>
        <begin position="524"/>
        <end position="526"/>
    </location>
</feature>
<feature type="helix" evidence="7">
    <location>
        <begin position="529"/>
        <end position="544"/>
    </location>
</feature>
<feature type="helix" evidence="7">
    <location>
        <begin position="546"/>
        <end position="559"/>
    </location>
</feature>
<feature type="helix" evidence="7">
    <location>
        <begin position="562"/>
        <end position="564"/>
    </location>
</feature>
<feature type="helix" evidence="7">
    <location>
        <begin position="576"/>
        <end position="587"/>
    </location>
</feature>
<feature type="helix" evidence="7">
    <location>
        <begin position="591"/>
        <end position="593"/>
    </location>
</feature>
<feature type="helix" evidence="7">
    <location>
        <begin position="594"/>
        <end position="614"/>
    </location>
</feature>
<feature type="helix" evidence="7">
    <location>
        <begin position="620"/>
        <end position="632"/>
    </location>
</feature>
<feature type="helix" evidence="7">
    <location>
        <begin position="635"/>
        <end position="640"/>
    </location>
</feature>
<feature type="helix" evidence="7">
    <location>
        <begin position="643"/>
        <end position="666"/>
    </location>
</feature>
<feature type="helix" evidence="7">
    <location>
        <begin position="672"/>
        <end position="699"/>
    </location>
</feature>
<feature type="helix" evidence="7">
    <location>
        <begin position="705"/>
        <end position="715"/>
    </location>
</feature>
<feature type="helix" evidence="7">
    <location>
        <begin position="718"/>
        <end position="725"/>
    </location>
</feature>
<feature type="helix" evidence="7">
    <location>
        <begin position="726"/>
        <end position="728"/>
    </location>
</feature>
<feature type="helix" evidence="7">
    <location>
        <begin position="735"/>
        <end position="740"/>
    </location>
</feature>
<feature type="helix" evidence="8">
    <location>
        <begin position="741"/>
        <end position="743"/>
    </location>
</feature>
<feature type="helix" evidence="7">
    <location>
        <begin position="745"/>
        <end position="768"/>
    </location>
</feature>
<feature type="helix" evidence="7">
    <location>
        <begin position="774"/>
        <end position="782"/>
    </location>
</feature>
<feature type="helix" evidence="7">
    <location>
        <begin position="788"/>
        <end position="811"/>
    </location>
</feature>
<feature type="helix" evidence="7">
    <location>
        <begin position="820"/>
        <end position="837"/>
    </location>
</feature>
<feature type="helix" evidence="7">
    <location>
        <begin position="839"/>
        <end position="843"/>
    </location>
</feature>
<feature type="helix" evidence="7">
    <location>
        <begin position="854"/>
        <end position="867"/>
    </location>
</feature>
<organism>
    <name type="scientific">Selaginella moellendorffii</name>
    <name type="common">Spikemoss</name>
    <dbReference type="NCBI Taxonomy" id="88036"/>
    <lineage>
        <taxon>Eukaryota</taxon>
        <taxon>Viridiplantae</taxon>
        <taxon>Streptophyta</taxon>
        <taxon>Embryophyta</taxon>
        <taxon>Tracheophyta</taxon>
        <taxon>Lycopodiopsida</taxon>
        <taxon>Selaginellales</taxon>
        <taxon>Selaginellaceae</taxon>
        <taxon>Selaginella</taxon>
    </lineage>
</organism>